<gene>
    <name type="primary">DEFB6</name>
</gene>
<keyword id="KW-0044">Antibiotic</keyword>
<keyword id="KW-0929">Antimicrobial</keyword>
<keyword id="KW-0211">Defensin</keyword>
<keyword id="KW-0903">Direct protein sequencing</keyword>
<keyword id="KW-1015">Disulfide bond</keyword>
<keyword id="KW-0873">Pyrrolidone carboxylic acid</keyword>
<keyword id="KW-1185">Reference proteome</keyword>
<keyword id="KW-0964">Secreted</keyword>
<dbReference type="PIR" id="F45495">
    <property type="entry name" value="F45495"/>
</dbReference>
<dbReference type="SMR" id="P46164"/>
<dbReference type="FunCoup" id="P46164">
    <property type="interactions" value="22"/>
</dbReference>
<dbReference type="PaxDb" id="9913-ENSBTAP00000046999"/>
<dbReference type="PeptideAtlas" id="P46164"/>
<dbReference type="InParanoid" id="P46164"/>
<dbReference type="Proteomes" id="UP000009136">
    <property type="component" value="Unplaced"/>
</dbReference>
<dbReference type="GO" id="GO:0005615">
    <property type="term" value="C:extracellular space"/>
    <property type="evidence" value="ECO:0000318"/>
    <property type="project" value="GO_Central"/>
</dbReference>
<dbReference type="GO" id="GO:0031731">
    <property type="term" value="F:CCR6 chemokine receptor binding"/>
    <property type="evidence" value="ECO:0000318"/>
    <property type="project" value="GO_Central"/>
</dbReference>
<dbReference type="GO" id="GO:0042056">
    <property type="term" value="F:chemoattractant activity"/>
    <property type="evidence" value="ECO:0000318"/>
    <property type="project" value="GO_Central"/>
</dbReference>
<dbReference type="GO" id="GO:0060326">
    <property type="term" value="P:cell chemotaxis"/>
    <property type="evidence" value="ECO:0000318"/>
    <property type="project" value="GO_Central"/>
</dbReference>
<dbReference type="GO" id="GO:0042742">
    <property type="term" value="P:defense response to bacterium"/>
    <property type="evidence" value="ECO:0000318"/>
    <property type="project" value="GO_Central"/>
</dbReference>
<dbReference type="FunFam" id="3.10.360.10:FF:000001">
    <property type="entry name" value="Beta-defensin 1"/>
    <property type="match status" value="1"/>
</dbReference>
<dbReference type="Gene3D" id="3.10.360.10">
    <property type="entry name" value="Antimicrobial Peptide, Beta-defensin 2, Chain A"/>
    <property type="match status" value="1"/>
</dbReference>
<dbReference type="InterPro" id="IPR006080">
    <property type="entry name" value="Beta/alpha-defensin_C"/>
</dbReference>
<dbReference type="InterPro" id="IPR001855">
    <property type="entry name" value="Defensin_beta-like"/>
</dbReference>
<dbReference type="PANTHER" id="PTHR20515">
    <property type="entry name" value="BETA-DEFENSIN"/>
    <property type="match status" value="1"/>
</dbReference>
<dbReference type="PANTHER" id="PTHR20515:SF2">
    <property type="entry name" value="DEFENSIN BETA 4A"/>
    <property type="match status" value="1"/>
</dbReference>
<dbReference type="Pfam" id="PF00711">
    <property type="entry name" value="Defensin_beta"/>
    <property type="match status" value="1"/>
</dbReference>
<dbReference type="SMART" id="SM00048">
    <property type="entry name" value="DEFSN"/>
    <property type="match status" value="1"/>
</dbReference>
<dbReference type="SUPFAM" id="SSF57392">
    <property type="entry name" value="Defensin-like"/>
    <property type="match status" value="1"/>
</dbReference>
<proteinExistence type="evidence at protein level"/>
<reference key="1">
    <citation type="journal article" date="1993" name="J. Biol. Chem.">
        <title>Purification, primary structures, and antibacterial activities of beta-defensins, a new family of antimicrobial peptides from bovine neutrophils.</title>
        <authorList>
            <person name="Selsted M.E."/>
            <person name="Tang Y.-Q."/>
            <person name="Morris W.L."/>
            <person name="McGuire P.A."/>
            <person name="Novotny M.J."/>
            <person name="Smith W."/>
            <person name="Henschen A.H."/>
            <person name="Cullor J.S."/>
        </authorList>
    </citation>
    <scope>PROTEIN SEQUENCE</scope>
    <scope>PYROGLUTAMATE FORMATION AT GLN-1</scope>
    <source>
        <strain>Hereford</strain>
        <tissue>Neutrophil</tissue>
    </source>
</reference>
<name>DEFB6_BOVIN</name>
<protein>
    <recommendedName>
        <fullName>Beta-defensin 6</fullName>
    </recommendedName>
    <alternativeName>
        <fullName>BNBD-6</fullName>
    </alternativeName>
    <alternativeName>
        <fullName>BNDB-6</fullName>
    </alternativeName>
</protein>
<comment type="function">
    <text>Has bactericidal activity. Active against E.coli ML35 and S.aureus 502A.</text>
</comment>
<comment type="subcellular location">
    <subcellularLocation>
        <location>Secreted</location>
    </subcellularLocation>
</comment>
<comment type="tissue specificity">
    <text>Neutrophilic granules.</text>
</comment>
<comment type="similarity">
    <text evidence="3">Belongs to the beta-defensin family.</text>
</comment>
<feature type="chain" id="PRO_0000064334" description="Beta-defensin 6">
    <location>
        <begin position="1"/>
        <end position="42"/>
    </location>
</feature>
<feature type="modified residue" description="Pyrrolidone carboxylic acid" evidence="2">
    <location>
        <position position="1"/>
    </location>
</feature>
<feature type="disulfide bond" evidence="1">
    <location>
        <begin position="9"/>
        <end position="38"/>
    </location>
</feature>
<feature type="disulfide bond" evidence="1">
    <location>
        <begin position="16"/>
        <end position="31"/>
    </location>
</feature>
<feature type="disulfide bond" evidence="1">
    <location>
        <begin position="21"/>
        <end position="39"/>
    </location>
</feature>
<sequence>QGVRNHVTCRIYGGFCVPIRCPGRTRQIGTCFGRPVKCCRRW</sequence>
<organism>
    <name type="scientific">Bos taurus</name>
    <name type="common">Bovine</name>
    <dbReference type="NCBI Taxonomy" id="9913"/>
    <lineage>
        <taxon>Eukaryota</taxon>
        <taxon>Metazoa</taxon>
        <taxon>Chordata</taxon>
        <taxon>Craniata</taxon>
        <taxon>Vertebrata</taxon>
        <taxon>Euteleostomi</taxon>
        <taxon>Mammalia</taxon>
        <taxon>Eutheria</taxon>
        <taxon>Laurasiatheria</taxon>
        <taxon>Artiodactyla</taxon>
        <taxon>Ruminantia</taxon>
        <taxon>Pecora</taxon>
        <taxon>Bovidae</taxon>
        <taxon>Bovinae</taxon>
        <taxon>Bos</taxon>
    </lineage>
</organism>
<accession>P46164</accession>
<evidence type="ECO:0000250" key="1"/>
<evidence type="ECO:0000269" key="2">
    <source>
    </source>
</evidence>
<evidence type="ECO:0000305" key="3"/>